<keyword id="KW-0044">Antibiotic</keyword>
<keyword id="KW-0929">Antimicrobial</keyword>
<keyword id="KW-0211">Defensin</keyword>
<keyword id="KW-1015">Disulfide bond</keyword>
<keyword id="KW-1185">Reference proteome</keyword>
<keyword id="KW-0964">Secreted</keyword>
<keyword id="KW-0732">Signal</keyword>
<dbReference type="EMBL" id="DQ012045">
    <property type="protein sequence ID" value="AAY59781.1"/>
    <property type="molecule type" value="mRNA"/>
</dbReference>
<dbReference type="EMBL" id="BC132224">
    <property type="protein sequence ID" value="AAI32225.1"/>
    <property type="molecule type" value="mRNA"/>
</dbReference>
<dbReference type="EMBL" id="BC132560">
    <property type="protein sequence ID" value="AAI32561.1"/>
    <property type="molecule type" value="mRNA"/>
</dbReference>
<dbReference type="CCDS" id="CCDS36946.1"/>
<dbReference type="RefSeq" id="NP_001034210.1">
    <property type="nucleotide sequence ID" value="NM_001039121.1"/>
</dbReference>
<dbReference type="SMR" id="Q30KM9"/>
<dbReference type="FunCoup" id="Q30KM9">
    <property type="interactions" value="151"/>
</dbReference>
<dbReference type="STRING" id="10090.ENSMUSP00000098060"/>
<dbReference type="PaxDb" id="10090-ENSMUSP00000098060"/>
<dbReference type="ProteomicsDB" id="279408"/>
<dbReference type="Ensembl" id="ENSMUST00000100491.2">
    <property type="protein sequence ID" value="ENSMUSP00000098060.2"/>
    <property type="gene ID" value="ENSMUSG00000075572.2"/>
</dbReference>
<dbReference type="GeneID" id="654458"/>
<dbReference type="KEGG" id="mmu:654458"/>
<dbReference type="UCSC" id="uc007uhc.1">
    <property type="organism name" value="mouse"/>
</dbReference>
<dbReference type="AGR" id="MGI:3647180"/>
<dbReference type="CTD" id="654458"/>
<dbReference type="MGI" id="MGI:3647180">
    <property type="gene designation" value="Defb43"/>
</dbReference>
<dbReference type="VEuPathDB" id="HostDB:ENSMUSG00000075572"/>
<dbReference type="eggNOG" id="ENOG502TEDN">
    <property type="taxonomic scope" value="Eukaryota"/>
</dbReference>
<dbReference type="GeneTree" id="ENSGT00390000001538"/>
<dbReference type="HOGENOM" id="CLU_203372_0_0_1"/>
<dbReference type="InParanoid" id="Q30KM9"/>
<dbReference type="OMA" id="ICCKLKY"/>
<dbReference type="OrthoDB" id="9524787at2759"/>
<dbReference type="PhylomeDB" id="Q30KM9"/>
<dbReference type="TreeFam" id="TF341399"/>
<dbReference type="Reactome" id="R-MMU-1461957">
    <property type="pathway name" value="Beta defensins"/>
</dbReference>
<dbReference type="Reactome" id="R-MMU-1461973">
    <property type="pathway name" value="Defensins"/>
</dbReference>
<dbReference type="BioGRID-ORCS" id="654458">
    <property type="hits" value="2 hits in 74 CRISPR screens"/>
</dbReference>
<dbReference type="ChiTaRS" id="Defb43">
    <property type="organism name" value="mouse"/>
</dbReference>
<dbReference type="PRO" id="PR:Q30KM9"/>
<dbReference type="Proteomes" id="UP000000589">
    <property type="component" value="Chromosome 14"/>
</dbReference>
<dbReference type="RNAct" id="Q30KM9">
    <property type="molecule type" value="protein"/>
</dbReference>
<dbReference type="Bgee" id="ENSMUSG00000075572">
    <property type="expression patterns" value="Expressed in mesodermal cell in embryo and 5 other cell types or tissues"/>
</dbReference>
<dbReference type="GO" id="GO:0005576">
    <property type="term" value="C:extracellular region"/>
    <property type="evidence" value="ECO:0007669"/>
    <property type="project" value="UniProtKB-SubCell"/>
</dbReference>
<dbReference type="GO" id="GO:0042742">
    <property type="term" value="P:defense response to bacterium"/>
    <property type="evidence" value="ECO:0007669"/>
    <property type="project" value="UniProtKB-KW"/>
</dbReference>
<dbReference type="GO" id="GO:0045087">
    <property type="term" value="P:innate immune response"/>
    <property type="evidence" value="ECO:0007669"/>
    <property type="project" value="InterPro"/>
</dbReference>
<dbReference type="InterPro" id="IPR025933">
    <property type="entry name" value="Beta_defensin_dom"/>
</dbReference>
<dbReference type="PANTHER" id="PTHR47900">
    <property type="entry name" value="BETA-DEFENSIN 131A"/>
    <property type="match status" value="1"/>
</dbReference>
<dbReference type="PANTHER" id="PTHR47900:SF1">
    <property type="entry name" value="BETA-DEFENSIN 131A"/>
    <property type="match status" value="1"/>
</dbReference>
<dbReference type="Pfam" id="PF13841">
    <property type="entry name" value="Defensin_beta_2"/>
    <property type="match status" value="1"/>
</dbReference>
<evidence type="ECO:0000250" key="1"/>
<evidence type="ECO:0000255" key="2"/>
<evidence type="ECO:0000305" key="3"/>
<reference key="1">
    <citation type="journal article" date="2005" name="Physiol. Genomics">
        <title>Cross-species analysis of the mammalian beta-defensin gene family: presence of syntenic gene clusters and preferential expression in the male reproductive tract.</title>
        <authorList>
            <person name="Patil A.A."/>
            <person name="Cai Y."/>
            <person name="Sang Y."/>
            <person name="Blecha F."/>
            <person name="Zhang G."/>
        </authorList>
    </citation>
    <scope>NUCLEOTIDE SEQUENCE [MRNA]</scope>
</reference>
<reference key="2">
    <citation type="journal article" date="2004" name="Genome Res.">
        <title>The status, quality, and expansion of the NIH full-length cDNA project: the Mammalian Gene Collection (MGC).</title>
        <authorList>
            <consortium name="The MGC Project Team"/>
        </authorList>
    </citation>
    <scope>NUCLEOTIDE SEQUENCE [LARGE SCALE MRNA]</scope>
    <source>
        <tissue>Testis</tissue>
    </source>
</reference>
<organism>
    <name type="scientific">Mus musculus</name>
    <name type="common">Mouse</name>
    <dbReference type="NCBI Taxonomy" id="10090"/>
    <lineage>
        <taxon>Eukaryota</taxon>
        <taxon>Metazoa</taxon>
        <taxon>Chordata</taxon>
        <taxon>Craniata</taxon>
        <taxon>Vertebrata</taxon>
        <taxon>Euteleostomi</taxon>
        <taxon>Mammalia</taxon>
        <taxon>Eutheria</taxon>
        <taxon>Euarchontoglires</taxon>
        <taxon>Glires</taxon>
        <taxon>Rodentia</taxon>
        <taxon>Myomorpha</taxon>
        <taxon>Muroidea</taxon>
        <taxon>Muridae</taxon>
        <taxon>Murinae</taxon>
        <taxon>Mus</taxon>
        <taxon>Mus</taxon>
    </lineage>
</organism>
<feature type="signal peptide" evidence="2">
    <location>
        <begin position="1"/>
        <end position="22"/>
    </location>
</feature>
<feature type="chain" id="PRO_0000352716" description="Beta-defensin 43">
    <location>
        <begin position="23"/>
        <end position="69"/>
    </location>
</feature>
<feature type="disulfide bond" evidence="1">
    <location>
        <begin position="29"/>
        <end position="56"/>
    </location>
</feature>
<feature type="disulfide bond" evidence="1">
    <location>
        <begin position="35"/>
        <end position="49"/>
    </location>
</feature>
<protein>
    <recommendedName>
        <fullName>Beta-defensin 43</fullName>
        <shortName>BD-43</shortName>
        <shortName>mBD-43</shortName>
    </recommendedName>
    <alternativeName>
        <fullName>Defensin, beta 43</fullName>
    </alternativeName>
</protein>
<proteinExistence type="inferred from homology"/>
<sequence>MRVLFSILGVLTLLSIVPLARSFLENQDCSKHRHCRMKCKANEYAVRYCEDWTICCRVKKKESKKKKMW</sequence>
<gene>
    <name type="primary">Defb43</name>
</gene>
<name>DFB43_MOUSE</name>
<comment type="function">
    <text evidence="1">Has bactericidal activity.</text>
</comment>
<comment type="subcellular location">
    <subcellularLocation>
        <location evidence="1">Secreted</location>
    </subcellularLocation>
</comment>
<comment type="similarity">
    <text evidence="3">Belongs to the beta-defensin family.</text>
</comment>
<accession>Q30KM9</accession>